<feature type="initiator methionine" description="Removed" evidence="2">
    <location>
        <position position="1"/>
    </location>
</feature>
<feature type="chain" id="PRO_0000144100" description="Nucleolar protein 3">
    <location>
        <begin position="2"/>
        <end position="220"/>
    </location>
</feature>
<feature type="domain" description="CARD" evidence="4">
    <location>
        <begin position="4"/>
        <end position="95"/>
    </location>
</feature>
<feature type="region of interest" description="Essential for interaction with BAX" evidence="3">
    <location>
        <begin position="20"/>
        <end position="70"/>
    </location>
</feature>
<feature type="region of interest" description="Disordered" evidence="5">
    <location>
        <begin position="111"/>
        <end position="220"/>
    </location>
</feature>
<feature type="compositionally biased region" description="Acidic residues" evidence="5">
    <location>
        <begin position="152"/>
        <end position="220"/>
    </location>
</feature>
<feature type="modified residue" description="Phosphothreonine; by CK2" evidence="3">
    <location>
        <position position="149"/>
    </location>
</feature>
<feature type="lipid moiety-binding region" description="N-myristoyl glycine" evidence="2">
    <location>
        <position position="2"/>
    </location>
</feature>
<feature type="mutagenesis site" description="Unable to inhibit TNF-induced necrosis; when associated with R-69. Unable to induce TNF nuclear translocation; when associated with R-69." evidence="10">
    <original>L</original>
    <variation>F</variation>
    <location>
        <position position="31"/>
    </location>
</feature>
<feature type="mutagenesis site" description="Unable to inhibit TNF-induced necrosis; when associated with F-31. Unable to induce TNF nuclear translocation; when associated with F-31." evidence="10">
    <original>G</original>
    <variation>R</variation>
    <location>
        <position position="69"/>
    </location>
</feature>
<sequence length="220" mass="24568">MGNVQERPSETIDRERKRLVETLQADSGLLLDALVARGVLTGPEYEALDALPDAERRVRRLLLLVQSKGEAACQELLRCAQQTVRMPDPAWDWQHVGPGYRNRSYDPSCPGHWTPEAPSSGTTCPELPRASEQEEVGGPEGSEALQPRTPEEPELEAEATEGDEPDLEQEMNPEQEPEPEPEPEPEPEPEPEPEPEPEPEPEPEPEPEPDFQEEDESEDS</sequence>
<gene>
    <name type="primary">Nol3</name>
    <name type="synonym">Arc</name>
</gene>
<evidence type="ECO:0000250" key="1"/>
<evidence type="ECO:0000250" key="2">
    <source>
        <dbReference type="UniProtKB" id="O60936"/>
    </source>
</evidence>
<evidence type="ECO:0000250" key="3">
    <source>
        <dbReference type="UniProtKB" id="Q62881"/>
    </source>
</evidence>
<evidence type="ECO:0000255" key="4">
    <source>
        <dbReference type="PROSITE-ProRule" id="PRU00046"/>
    </source>
</evidence>
<evidence type="ECO:0000256" key="5">
    <source>
        <dbReference type="SAM" id="MobiDB-lite"/>
    </source>
</evidence>
<evidence type="ECO:0000269" key="6">
    <source>
    </source>
</evidence>
<evidence type="ECO:0000269" key="7">
    <source>
    </source>
</evidence>
<evidence type="ECO:0000269" key="8">
    <source>
    </source>
</evidence>
<evidence type="ECO:0000269" key="9">
    <source>
    </source>
</evidence>
<evidence type="ECO:0000269" key="10">
    <source>
    </source>
</evidence>
<evidence type="ECO:0000305" key="11">
    <source>
    </source>
</evidence>
<evidence type="ECO:0000312" key="12">
    <source>
        <dbReference type="MGI" id="MGI:1925938"/>
    </source>
</evidence>
<accession>Q9D1X0</accession>
<reference key="1">
    <citation type="journal article" date="2005" name="Science">
        <title>The transcriptional landscape of the mammalian genome.</title>
        <authorList>
            <person name="Carninci P."/>
            <person name="Kasukawa T."/>
            <person name="Katayama S."/>
            <person name="Gough J."/>
            <person name="Frith M.C."/>
            <person name="Maeda N."/>
            <person name="Oyama R."/>
            <person name="Ravasi T."/>
            <person name="Lenhard B."/>
            <person name="Wells C."/>
            <person name="Kodzius R."/>
            <person name="Shimokawa K."/>
            <person name="Bajic V.B."/>
            <person name="Brenner S.E."/>
            <person name="Batalov S."/>
            <person name="Forrest A.R."/>
            <person name="Zavolan M."/>
            <person name="Davis M.J."/>
            <person name="Wilming L.G."/>
            <person name="Aidinis V."/>
            <person name="Allen J.E."/>
            <person name="Ambesi-Impiombato A."/>
            <person name="Apweiler R."/>
            <person name="Aturaliya R.N."/>
            <person name="Bailey T.L."/>
            <person name="Bansal M."/>
            <person name="Baxter L."/>
            <person name="Beisel K.W."/>
            <person name="Bersano T."/>
            <person name="Bono H."/>
            <person name="Chalk A.M."/>
            <person name="Chiu K.P."/>
            <person name="Choudhary V."/>
            <person name="Christoffels A."/>
            <person name="Clutterbuck D.R."/>
            <person name="Crowe M.L."/>
            <person name="Dalla E."/>
            <person name="Dalrymple B.P."/>
            <person name="de Bono B."/>
            <person name="Della Gatta G."/>
            <person name="di Bernardo D."/>
            <person name="Down T."/>
            <person name="Engstrom P."/>
            <person name="Fagiolini M."/>
            <person name="Faulkner G."/>
            <person name="Fletcher C.F."/>
            <person name="Fukushima T."/>
            <person name="Furuno M."/>
            <person name="Futaki S."/>
            <person name="Gariboldi M."/>
            <person name="Georgii-Hemming P."/>
            <person name="Gingeras T.R."/>
            <person name="Gojobori T."/>
            <person name="Green R.E."/>
            <person name="Gustincich S."/>
            <person name="Harbers M."/>
            <person name="Hayashi Y."/>
            <person name="Hensch T.K."/>
            <person name="Hirokawa N."/>
            <person name="Hill D."/>
            <person name="Huminiecki L."/>
            <person name="Iacono M."/>
            <person name="Ikeo K."/>
            <person name="Iwama A."/>
            <person name="Ishikawa T."/>
            <person name="Jakt M."/>
            <person name="Kanapin A."/>
            <person name="Katoh M."/>
            <person name="Kawasawa Y."/>
            <person name="Kelso J."/>
            <person name="Kitamura H."/>
            <person name="Kitano H."/>
            <person name="Kollias G."/>
            <person name="Krishnan S.P."/>
            <person name="Kruger A."/>
            <person name="Kummerfeld S.K."/>
            <person name="Kurochkin I.V."/>
            <person name="Lareau L.F."/>
            <person name="Lazarevic D."/>
            <person name="Lipovich L."/>
            <person name="Liu J."/>
            <person name="Liuni S."/>
            <person name="McWilliam S."/>
            <person name="Madan Babu M."/>
            <person name="Madera M."/>
            <person name="Marchionni L."/>
            <person name="Matsuda H."/>
            <person name="Matsuzawa S."/>
            <person name="Miki H."/>
            <person name="Mignone F."/>
            <person name="Miyake S."/>
            <person name="Morris K."/>
            <person name="Mottagui-Tabar S."/>
            <person name="Mulder N."/>
            <person name="Nakano N."/>
            <person name="Nakauchi H."/>
            <person name="Ng P."/>
            <person name="Nilsson R."/>
            <person name="Nishiguchi S."/>
            <person name="Nishikawa S."/>
            <person name="Nori F."/>
            <person name="Ohara O."/>
            <person name="Okazaki Y."/>
            <person name="Orlando V."/>
            <person name="Pang K.C."/>
            <person name="Pavan W.J."/>
            <person name="Pavesi G."/>
            <person name="Pesole G."/>
            <person name="Petrovsky N."/>
            <person name="Piazza S."/>
            <person name="Reed J."/>
            <person name="Reid J.F."/>
            <person name="Ring B.Z."/>
            <person name="Ringwald M."/>
            <person name="Rost B."/>
            <person name="Ruan Y."/>
            <person name="Salzberg S.L."/>
            <person name="Sandelin A."/>
            <person name="Schneider C."/>
            <person name="Schoenbach C."/>
            <person name="Sekiguchi K."/>
            <person name="Semple C.A."/>
            <person name="Seno S."/>
            <person name="Sessa L."/>
            <person name="Sheng Y."/>
            <person name="Shibata Y."/>
            <person name="Shimada H."/>
            <person name="Shimada K."/>
            <person name="Silva D."/>
            <person name="Sinclair B."/>
            <person name="Sperling S."/>
            <person name="Stupka E."/>
            <person name="Sugiura K."/>
            <person name="Sultana R."/>
            <person name="Takenaka Y."/>
            <person name="Taki K."/>
            <person name="Tammoja K."/>
            <person name="Tan S.L."/>
            <person name="Tang S."/>
            <person name="Taylor M.S."/>
            <person name="Tegner J."/>
            <person name="Teichmann S.A."/>
            <person name="Ueda H.R."/>
            <person name="van Nimwegen E."/>
            <person name="Verardo R."/>
            <person name="Wei C.L."/>
            <person name="Yagi K."/>
            <person name="Yamanishi H."/>
            <person name="Zabarovsky E."/>
            <person name="Zhu S."/>
            <person name="Zimmer A."/>
            <person name="Hide W."/>
            <person name="Bult C."/>
            <person name="Grimmond S.M."/>
            <person name="Teasdale R.D."/>
            <person name="Liu E.T."/>
            <person name="Brusic V."/>
            <person name="Quackenbush J."/>
            <person name="Wahlestedt C."/>
            <person name="Mattick J.S."/>
            <person name="Hume D.A."/>
            <person name="Kai C."/>
            <person name="Sasaki D."/>
            <person name="Tomaru Y."/>
            <person name="Fukuda S."/>
            <person name="Kanamori-Katayama M."/>
            <person name="Suzuki M."/>
            <person name="Aoki J."/>
            <person name="Arakawa T."/>
            <person name="Iida J."/>
            <person name="Imamura K."/>
            <person name="Itoh M."/>
            <person name="Kato T."/>
            <person name="Kawaji H."/>
            <person name="Kawagashira N."/>
            <person name="Kawashima T."/>
            <person name="Kojima M."/>
            <person name="Kondo S."/>
            <person name="Konno H."/>
            <person name="Nakano K."/>
            <person name="Ninomiya N."/>
            <person name="Nishio T."/>
            <person name="Okada M."/>
            <person name="Plessy C."/>
            <person name="Shibata K."/>
            <person name="Shiraki T."/>
            <person name="Suzuki S."/>
            <person name="Tagami M."/>
            <person name="Waki K."/>
            <person name="Watahiki A."/>
            <person name="Okamura-Oho Y."/>
            <person name="Suzuki H."/>
            <person name="Kawai J."/>
            <person name="Hayashizaki Y."/>
        </authorList>
    </citation>
    <scope>NUCLEOTIDE SEQUENCE [LARGE SCALE MRNA]</scope>
    <source>
        <strain>C57BL/6J</strain>
        <tissue>Adipose tissue</tissue>
    </source>
</reference>
<reference key="2">
    <citation type="journal article" date="2004" name="Mol. Cell">
        <title>Inhibition of both the extrinsic and intrinsic death pathways through nonhomotypic death-fold interactions.</title>
        <authorList>
            <person name="Nam Y.J."/>
            <person name="Mani K."/>
            <person name="Ashton A.W."/>
            <person name="Peng C.F."/>
            <person name="Krishnamurthy B."/>
            <person name="Hayakawa Y."/>
            <person name="Lee P."/>
            <person name="Korsmeyer S.J."/>
            <person name="Kitsis R.N."/>
        </authorList>
    </citation>
    <scope>INTERACTION WITH FADD; FAS; CASP8 AND BAX</scope>
</reference>
<reference key="3">
    <citation type="journal article" date="2006" name="Circulation">
        <title>Apoptosis repressor with caspase recruitment domain is required for cardioprotection in response to biomechanical and ischemic stress.</title>
        <authorList>
            <person name="Donath S."/>
            <person name="Li P."/>
            <person name="Willenbockel C."/>
            <person name="Al-Saadi N."/>
            <person name="Gross V."/>
            <person name="Willnow T."/>
            <person name="Bader M."/>
            <person name="Martin U."/>
            <person name="Bauersachs J."/>
            <person name="Wollert K.C."/>
            <person name="Dietz R."/>
            <person name="von Harsdorf R."/>
        </authorList>
    </citation>
    <scope>DISRUPTION PHENOTYPE</scope>
    <scope>FUNCTION</scope>
</reference>
<reference key="4">
    <citation type="journal article" date="2010" name="Cell">
        <title>A tissue-specific atlas of mouse protein phosphorylation and expression.</title>
        <authorList>
            <person name="Huttlin E.L."/>
            <person name="Jedrychowski M.P."/>
            <person name="Elias J.E."/>
            <person name="Goswami T."/>
            <person name="Rad R."/>
            <person name="Beausoleil S.A."/>
            <person name="Villen J."/>
            <person name="Haas W."/>
            <person name="Sowa M.E."/>
            <person name="Gygi S.P."/>
        </authorList>
    </citation>
    <scope>IDENTIFICATION BY MASS SPECTROMETRY [LARGE SCALE ANALYSIS]</scope>
    <source>
        <tissue>Brain</tissue>
        <tissue>Brown adipose tissue</tissue>
        <tissue>Heart</tissue>
        <tissue>Kidney</tissue>
        <tissue>Lung</tissue>
        <tissue>Pancreas</tissue>
        <tissue>Spleen</tissue>
    </source>
</reference>
<reference key="5">
    <citation type="journal article" date="2011" name="Circulation">
        <title>A critical role for the protein apoptosis repressor with caspase recruitment domain in hypoxia-induced pulmonary hypertension.</title>
        <authorList>
            <person name="Zaiman A.L."/>
            <person name="Damico R."/>
            <person name="Thoms-Chesley A."/>
            <person name="Files D.C."/>
            <person name="Kesari P."/>
            <person name="Johnston L."/>
            <person name="Swaim M."/>
            <person name="Mozammel S."/>
            <person name="Myers A.C."/>
            <person name="Halushka M."/>
            <person name="El-Haddad H."/>
            <person name="Shimoda L.A."/>
            <person name="Peng C.F."/>
            <person name="Hassoun P.M."/>
            <person name="Champion H.C."/>
            <person name="Kitsis R.N."/>
            <person name="Crow M.T."/>
        </authorList>
    </citation>
    <scope>FUNCTION</scope>
</reference>
<reference key="6">
    <citation type="journal article" date="2013" name="PLoS ONE">
        <title>Apoptosis repressor with a CARD domain (ARC) restrains Bax-mediated pathogenesis in dystrophic skeletal muscle.</title>
        <authorList>
            <person name="Davis J."/>
            <person name="Kwong J.Q."/>
            <person name="Kitsis R.N."/>
            <person name="Molkentin J.D."/>
        </authorList>
    </citation>
    <scope>FUNCTION</scope>
    <scope>DISRUPTION PHENOTYPE</scope>
</reference>
<reference key="7">
    <citation type="journal article" date="2014" name="Cell Death Differ.">
        <title>A novel role for the apoptosis inhibitor ARC in suppressing TNFalpha-induced regulated necrosis.</title>
        <authorList>
            <person name="Kung G."/>
            <person name="Dai P."/>
            <person name="Deng L."/>
            <person name="Kitsis R.N."/>
        </authorList>
    </citation>
    <scope>FUNCTION</scope>
    <scope>INTERACTION WITH TNFRSF1A</scope>
    <scope>MUTAGENESIS OF LEU-31 AND GLY-69</scope>
</reference>
<protein>
    <recommendedName>
        <fullName evidence="12">Nucleolar protein 3</fullName>
    </recommendedName>
    <alternativeName>
        <fullName evidence="11">Apoptosis repressor with CARD</fullName>
    </alternativeName>
</protein>
<organism>
    <name type="scientific">Mus musculus</name>
    <name type="common">Mouse</name>
    <dbReference type="NCBI Taxonomy" id="10090"/>
    <lineage>
        <taxon>Eukaryota</taxon>
        <taxon>Metazoa</taxon>
        <taxon>Chordata</taxon>
        <taxon>Craniata</taxon>
        <taxon>Vertebrata</taxon>
        <taxon>Euteleostomi</taxon>
        <taxon>Mammalia</taxon>
        <taxon>Eutheria</taxon>
        <taxon>Euarchontoglires</taxon>
        <taxon>Glires</taxon>
        <taxon>Rodentia</taxon>
        <taxon>Myomorpha</taxon>
        <taxon>Muroidea</taxon>
        <taxon>Muridae</taxon>
        <taxon>Murinae</taxon>
        <taxon>Mus</taxon>
        <taxon>Mus</taxon>
    </lineage>
</organism>
<keyword id="KW-0106">Calcium</keyword>
<keyword id="KW-0963">Cytoplasm</keyword>
<keyword id="KW-0449">Lipoprotein</keyword>
<keyword id="KW-0472">Membrane</keyword>
<keyword id="KW-0479">Metal-binding</keyword>
<keyword id="KW-0496">Mitochondrion</keyword>
<keyword id="KW-0507">mRNA processing</keyword>
<keyword id="KW-0519">Myristate</keyword>
<keyword id="KW-0597">Phosphoprotein</keyword>
<keyword id="KW-1185">Reference proteome</keyword>
<keyword id="KW-0703">Sarcoplasmic reticulum</keyword>
<keyword id="KW-0832">Ubl conjugation</keyword>
<name>NOL3_MOUSE</name>
<dbReference type="EMBL" id="AK021023">
    <property type="protein sequence ID" value="BAB32281.1"/>
    <property type="molecule type" value="mRNA"/>
</dbReference>
<dbReference type="CCDS" id="CCDS52657.1"/>
<dbReference type="RefSeq" id="NP_084428.1">
    <property type="nucleotide sequence ID" value="NM_030152.4"/>
</dbReference>
<dbReference type="RefSeq" id="XP_006531566.1">
    <property type="nucleotide sequence ID" value="XM_006531503.3"/>
</dbReference>
<dbReference type="SMR" id="Q9D1X0"/>
<dbReference type="BioGRID" id="219569">
    <property type="interactions" value="3"/>
</dbReference>
<dbReference type="FunCoup" id="Q9D1X0">
    <property type="interactions" value="299"/>
</dbReference>
<dbReference type="IntAct" id="Q9D1X0">
    <property type="interactions" value="2"/>
</dbReference>
<dbReference type="STRING" id="10090.ENSMUSP00000014920"/>
<dbReference type="GlyGen" id="Q9D1X0">
    <property type="glycosylation" value="1 site, 1 O-linked glycan (1 site)"/>
</dbReference>
<dbReference type="iPTMnet" id="Q9D1X0"/>
<dbReference type="PhosphoSitePlus" id="Q9D1X0"/>
<dbReference type="SwissPalm" id="Q9D1X0"/>
<dbReference type="jPOST" id="Q9D1X0"/>
<dbReference type="PaxDb" id="10090-ENSMUSP00000014920"/>
<dbReference type="ProteomicsDB" id="252839"/>
<dbReference type="Antibodypedia" id="3976">
    <property type="antibodies" value="370 antibodies from 39 providers"/>
</dbReference>
<dbReference type="DNASU" id="78688"/>
<dbReference type="Ensembl" id="ENSMUST00000014920.8">
    <property type="protein sequence ID" value="ENSMUSP00000014920.7"/>
    <property type="gene ID" value="ENSMUSG00000014776.8"/>
</dbReference>
<dbReference type="GeneID" id="78688"/>
<dbReference type="KEGG" id="mmu:78688"/>
<dbReference type="UCSC" id="uc009ncd.1">
    <property type="organism name" value="mouse"/>
</dbReference>
<dbReference type="AGR" id="MGI:1925938"/>
<dbReference type="CTD" id="8996"/>
<dbReference type="MGI" id="MGI:1925938">
    <property type="gene designation" value="Nol3"/>
</dbReference>
<dbReference type="VEuPathDB" id="HostDB:ENSMUSG00000014776"/>
<dbReference type="eggNOG" id="ENOG502SR4M">
    <property type="taxonomic scope" value="Eukaryota"/>
</dbReference>
<dbReference type="GeneTree" id="ENSGT00510000049353"/>
<dbReference type="HOGENOM" id="CLU_090015_0_0_1"/>
<dbReference type="InParanoid" id="Q9D1X0"/>
<dbReference type="OMA" id="MGNSQER"/>
<dbReference type="OrthoDB" id="9627417at2759"/>
<dbReference type="PhylomeDB" id="Q9D1X0"/>
<dbReference type="TreeFam" id="TF336957"/>
<dbReference type="BioGRID-ORCS" id="78688">
    <property type="hits" value="5 hits in 79 CRISPR screens"/>
</dbReference>
<dbReference type="PRO" id="PR:Q9D1X0"/>
<dbReference type="Proteomes" id="UP000000589">
    <property type="component" value="Chromosome 8"/>
</dbReference>
<dbReference type="RNAct" id="Q9D1X0">
    <property type="molecule type" value="protein"/>
</dbReference>
<dbReference type="Bgee" id="ENSMUSG00000014776">
    <property type="expression patterns" value="Expressed in lumbar dorsal root ganglion and 137 other cell types or tissues"/>
</dbReference>
<dbReference type="ExpressionAtlas" id="Q9D1X0">
    <property type="expression patterns" value="baseline and differential"/>
</dbReference>
<dbReference type="GO" id="GO:0016020">
    <property type="term" value="C:membrane"/>
    <property type="evidence" value="ECO:0007669"/>
    <property type="project" value="UniProtKB-SubCell"/>
</dbReference>
<dbReference type="GO" id="GO:0005739">
    <property type="term" value="C:mitochondrion"/>
    <property type="evidence" value="ECO:0000314"/>
    <property type="project" value="MGI"/>
</dbReference>
<dbReference type="GO" id="GO:0005730">
    <property type="term" value="C:nucleolus"/>
    <property type="evidence" value="ECO:0000250"/>
    <property type="project" value="UniProtKB"/>
</dbReference>
<dbReference type="GO" id="GO:0016528">
    <property type="term" value="C:sarcoplasm"/>
    <property type="evidence" value="ECO:0000314"/>
    <property type="project" value="MGI"/>
</dbReference>
<dbReference type="GO" id="GO:0016529">
    <property type="term" value="C:sarcoplasmic reticulum"/>
    <property type="evidence" value="ECO:0007669"/>
    <property type="project" value="UniProtKB-SubCell"/>
</dbReference>
<dbReference type="GO" id="GO:0005509">
    <property type="term" value="F:calcium ion binding"/>
    <property type="evidence" value="ECO:0007669"/>
    <property type="project" value="Ensembl"/>
</dbReference>
<dbReference type="GO" id="GO:0089720">
    <property type="term" value="F:caspase binding"/>
    <property type="evidence" value="ECO:0007669"/>
    <property type="project" value="Ensembl"/>
</dbReference>
<dbReference type="GO" id="GO:0043027">
    <property type="term" value="F:cysteine-type endopeptidase inhibitor activity involved in apoptotic process"/>
    <property type="evidence" value="ECO:0007669"/>
    <property type="project" value="Ensembl"/>
</dbReference>
<dbReference type="GO" id="GO:0035877">
    <property type="term" value="F:death effector domain binding"/>
    <property type="evidence" value="ECO:0000353"/>
    <property type="project" value="UniProtKB"/>
</dbReference>
<dbReference type="GO" id="GO:0005123">
    <property type="term" value="F:death receptor binding"/>
    <property type="evidence" value="ECO:0000353"/>
    <property type="project" value="UniProtKB"/>
</dbReference>
<dbReference type="GO" id="GO:0042802">
    <property type="term" value="F:identical protein binding"/>
    <property type="evidence" value="ECO:0007669"/>
    <property type="project" value="Ensembl"/>
</dbReference>
<dbReference type="GO" id="GO:0005102">
    <property type="term" value="F:signaling receptor binding"/>
    <property type="evidence" value="ECO:0000353"/>
    <property type="project" value="UniProtKB"/>
</dbReference>
<dbReference type="GO" id="GO:0001974">
    <property type="term" value="P:blood vessel remodeling"/>
    <property type="evidence" value="ECO:0000315"/>
    <property type="project" value="UniProtKB"/>
</dbReference>
<dbReference type="GO" id="GO:0010659">
    <property type="term" value="P:cardiac muscle cell apoptotic process"/>
    <property type="evidence" value="ECO:0000315"/>
    <property type="project" value="UniProtKB"/>
</dbReference>
<dbReference type="GO" id="GO:0097193">
    <property type="term" value="P:intrinsic apoptotic signaling pathway"/>
    <property type="evidence" value="ECO:0000315"/>
    <property type="project" value="UniProtKB"/>
</dbReference>
<dbReference type="GO" id="GO:0006376">
    <property type="term" value="P:mRNA splice site recognition"/>
    <property type="evidence" value="ECO:0000250"/>
    <property type="project" value="UniProtKB"/>
</dbReference>
<dbReference type="GO" id="GO:0043066">
    <property type="term" value="P:negative regulation of apoptotic process"/>
    <property type="evidence" value="ECO:0000315"/>
    <property type="project" value="UniProtKB"/>
</dbReference>
<dbReference type="GO" id="GO:0010667">
    <property type="term" value="P:negative regulation of cardiac muscle cell apoptotic process"/>
    <property type="evidence" value="ECO:0000315"/>
    <property type="project" value="UniProtKB"/>
</dbReference>
<dbReference type="GO" id="GO:2001237">
    <property type="term" value="P:negative regulation of extrinsic apoptotic signaling pathway"/>
    <property type="evidence" value="ECO:0007669"/>
    <property type="project" value="Ensembl"/>
</dbReference>
<dbReference type="GO" id="GO:1903298">
    <property type="term" value="P:negative regulation of hypoxia-induced intrinsic apoptotic signaling pathway"/>
    <property type="evidence" value="ECO:0000250"/>
    <property type="project" value="UniProtKB"/>
</dbReference>
<dbReference type="GO" id="GO:1902109">
    <property type="term" value="P:negative regulation of mitochondrial membrane permeability involved in apoptotic process"/>
    <property type="evidence" value="ECO:0000315"/>
    <property type="project" value="UniProtKB"/>
</dbReference>
<dbReference type="GO" id="GO:0014736">
    <property type="term" value="P:negative regulation of muscle atrophy"/>
    <property type="evidence" value="ECO:0000315"/>
    <property type="project" value="UniProtKB"/>
</dbReference>
<dbReference type="GO" id="GO:1902176">
    <property type="term" value="P:negative regulation of oxidative stress-induced intrinsic apoptotic signaling pathway"/>
    <property type="evidence" value="ECO:0007669"/>
    <property type="project" value="Ensembl"/>
</dbReference>
<dbReference type="GO" id="GO:0062099">
    <property type="term" value="P:negative regulation of programmed necrotic cell death"/>
    <property type="evidence" value="ECO:0000315"/>
    <property type="project" value="UniProtKB"/>
</dbReference>
<dbReference type="GO" id="GO:0090201">
    <property type="term" value="P:negative regulation of release of cytochrome c from mitochondria"/>
    <property type="evidence" value="ECO:0000250"/>
    <property type="project" value="UniProtKB"/>
</dbReference>
<dbReference type="GO" id="GO:0010664">
    <property type="term" value="P:negative regulation of striated muscle cell apoptotic process"/>
    <property type="evidence" value="ECO:0000315"/>
    <property type="project" value="UniProtKB"/>
</dbReference>
<dbReference type="GO" id="GO:0010804">
    <property type="term" value="P:negative regulation of tumor necrosis factor-mediated signaling pathway"/>
    <property type="evidence" value="ECO:0000315"/>
    <property type="project" value="UniProtKB"/>
</dbReference>
<dbReference type="GO" id="GO:0051259">
    <property type="term" value="P:protein complex oligomerization"/>
    <property type="evidence" value="ECO:0000250"/>
    <property type="project" value="UniProtKB"/>
</dbReference>
<dbReference type="GO" id="GO:0010468">
    <property type="term" value="P:regulation of gene expression"/>
    <property type="evidence" value="ECO:0000315"/>
    <property type="project" value="MGI"/>
</dbReference>
<dbReference type="GO" id="GO:1901222">
    <property type="term" value="P:regulation of non-canonical NF-kappaB signal transduction"/>
    <property type="evidence" value="ECO:0000315"/>
    <property type="project" value="UniProtKB"/>
</dbReference>
<dbReference type="GO" id="GO:0014808">
    <property type="term" value="P:release of sequestered calcium ion into cytosol by sarcoplasmic reticulum"/>
    <property type="evidence" value="ECO:0007669"/>
    <property type="project" value="Ensembl"/>
</dbReference>
<dbReference type="GO" id="GO:0001666">
    <property type="term" value="P:response to hypoxia"/>
    <property type="evidence" value="ECO:0000315"/>
    <property type="project" value="MGI"/>
</dbReference>
<dbReference type="GO" id="GO:0014876">
    <property type="term" value="P:response to injury involved in regulation of muscle adaptation"/>
    <property type="evidence" value="ECO:0000315"/>
    <property type="project" value="MGI"/>
</dbReference>
<dbReference type="GO" id="GO:0002931">
    <property type="term" value="P:response to ischemia"/>
    <property type="evidence" value="ECO:0000315"/>
    <property type="project" value="UniProtKB"/>
</dbReference>
<dbReference type="CDD" id="cd01671">
    <property type="entry name" value="CARD"/>
    <property type="match status" value="1"/>
</dbReference>
<dbReference type="FunFam" id="1.10.533.10:FF:000035">
    <property type="entry name" value="nucleolar protein 3 isoform X5"/>
    <property type="match status" value="1"/>
</dbReference>
<dbReference type="Gene3D" id="1.10.533.10">
    <property type="entry name" value="Death Domain, Fas"/>
    <property type="match status" value="1"/>
</dbReference>
<dbReference type="InterPro" id="IPR052685">
    <property type="entry name" value="Apoptosis_Repressor_CARD"/>
</dbReference>
<dbReference type="InterPro" id="IPR001315">
    <property type="entry name" value="CARD"/>
</dbReference>
<dbReference type="InterPro" id="IPR011029">
    <property type="entry name" value="DEATH-like_dom_sf"/>
</dbReference>
<dbReference type="PANTHER" id="PTHR22797">
    <property type="entry name" value="CARD6/NUCLEOLAR PROTEIN 3"/>
    <property type="match status" value="1"/>
</dbReference>
<dbReference type="PANTHER" id="PTHR22797:SF37">
    <property type="entry name" value="NUCLEOLAR PROTEIN 3"/>
    <property type="match status" value="1"/>
</dbReference>
<dbReference type="Pfam" id="PF00619">
    <property type="entry name" value="CARD"/>
    <property type="match status" value="1"/>
</dbReference>
<dbReference type="SMART" id="SM00114">
    <property type="entry name" value="CARD"/>
    <property type="match status" value="1"/>
</dbReference>
<dbReference type="SUPFAM" id="SSF47986">
    <property type="entry name" value="DEATH domain"/>
    <property type="match status" value="1"/>
</dbReference>
<dbReference type="PROSITE" id="PS50209">
    <property type="entry name" value="CARD"/>
    <property type="match status" value="1"/>
</dbReference>
<proteinExistence type="evidence at protein level"/>
<comment type="function">
    <text evidence="1 2 3 7 8 9 10">Apoptosis repressor that blocks multiple modes of cell death. Inhibits extrinsic apoptotic pathways through two different ways. Firstly by interacting with FAS and FADD upon FAS activation blocking death-inducing signaling complex (DISC) assembly (By similarity). Secondly by interacting with CASP8 in a mitochondria localization- and phosphorylation-dependent manner, limiting the amount of soluble CASP8 available for DISC-mediated activation (By similarity). Inhibits intrinsic apoptotic pathway in response to a wide range of stresses, through its interaction with BAX resulting in BAX inactivation, preventing mitochondrial dysfunction and release of pro-apoptotic factors (PubMed:16505176, PubMed:24312627). Inhibits calcium-mediated cell death by functioning as a cytosolic calcium buffer, dissociating its interaction with CASP8 and maintaining calcium homeostasis (By similarity). Negatively regulates oxidative stress-induced apoptosis by phosphorylation-dependent suppression of the mitochondria-mediated intrinsic pathway, by blocking CASP2 activation and BAX translocation (By similarity). Negatively regulates hypoxia-induced apoptosis in part by inhibiting the release of cytochrome c from mitochondria in a caspase-independent manner (By similarity). Also inhibits TNF-induced necrosis by preventing TNF-signaling pathway through TNFRSF1A interaction abrogating the recruitment of RIPK1 to complex I (PubMed:24440909). Finally through its role as apoptosis repressor, promotes vascular remodeling through inhibition of apoptosis and stimulation of proliferation, in response to hypoxia (PubMed:22082675). Inhibits too myoblast differentiation through caspase inhibition (By similarity).</text>
</comment>
<comment type="subunit">
    <text evidence="2 3 6 10">Oligomerizes (via CARD doamin) (By similarity). Interacts (via CARD domain) with CASP2; inhibits CASP2 activity in a phosphorylation-dependent manner (By similarity). Interacts with CASP8; decreases CASP8 activity in a mitochondria localization- and phosphorylation-dependent manner and this interaction is dissociated by calcium. Interacts with TFPT; translocates NOL3 into the nucleus and negatively regulated TFPT-induced cell death (By similarity). Interacts directly (via CARD domain) with FAS and FADD (via DED domain); inhibits death-inducing signaling complex (DISC) assembly by inhibiting the increase in FAS-FADD binding induced by FAS activation. Interacts (via CARD domain) with BAX (via a C-terminal 33 residues); inhibits BAX activation and translocation and consequently cytochrome c release from mitochondria. Interacts with PPM1G; may dephosphorylate NOL3 (By similarity). Interacts (via CARD domain) with BBC3 (via BH3 domain); preventing the association of BBC3 with BCL2 and resulting in activation of CASP8 (By similarity). Interacts (via CARD domain) with BAD(via BH3 domain); preventing the association of BAD with BCL2 (By similarity). Interacts directly (via CARD domain) with TNFRSF1A; inhibits TNF-signaling pathway.</text>
</comment>
<comment type="interaction">
    <interactant intactId="EBI-913097">
        <id>Q9D1X0</id>
    </interactant>
    <interactant intactId="EBI-913075">
        <id>Q6PFR5</id>
        <label>Tra2a</label>
    </interactant>
    <organismsDiffer>false</organismsDiffer>
    <experiments>4</experiments>
</comment>
<comment type="subcellular location">
    <subcellularLocation>
        <location evidence="2 3">Cytoplasm</location>
    </subcellularLocation>
    <subcellularLocation>
        <location evidence="3">Mitochondrion</location>
    </subcellularLocation>
    <subcellularLocation>
        <location evidence="3">Sarcoplasmic reticulum</location>
    </subcellularLocation>
    <subcellularLocation>
        <location evidence="2">Membrane</location>
        <topology evidence="2">Lipid-anchor</topology>
    </subcellularLocation>
    <text evidence="3">Phosphorylation at Thr-149 results in translocation to mitochondria. Colocalized with mitochondria in response to oxidative stress.</text>
</comment>
<comment type="domain">
    <text evidence="2 3 10">CARD is critical for both extrinsic and intrinsic apoptotic pathways (By similarity). CARD domain mediates a protective effect against myocardial ischemia/reperfusion, oxidative stress and TNF-induced necrosis (PubMed:24440909). The C-terminal domain (amino acids 99 to 220) is involved in calcium binding and plays a protective role in calcium-mediated cell death (By similarity).</text>
</comment>
<comment type="PTM">
    <text evidence="3">Phosphorylation at Thr-149 is required for its antiapoptotic effect by blocking death-inducing signaling complex death-inducing signaling complex (DISC) activity through the control of interaction with CASP8. Phosphorylation at Thr-149 results in translocation to mitochondria and this translocation enables the binding to CASP8. Dephosphorylated at Thr-149 by calcineurin; doesn't inhibit the association between FADD and CASP8 and the consequent apoptosis.</text>
</comment>
<comment type="PTM">
    <text evidence="2 3">Polyubiquitinated by MDM2; promoting proteasomal-dependent degradation in response to apoptotic stimuli.</text>
</comment>
<comment type="disruption phenotype">
    <text evidence="7 9">Mice homozygous for the NOL3-null allele are born normally and externally indistinguishable from littermates of other genotypes. NOL3-null mice grew to adulthood without any abnormalities in their general health and appearance under resting conditions. Under biomechanical stress, NOL3-deficient mice develop accelerated cardiomyopathy which is characterized by reduced contractile function, cardiac enlargement, and myocardial fibrosis. Likewise, under ischemia/reperfusion injury of NOL3-deficient mice have a markedly increased myocardial infarct sizes (PubMed:16505176). Double homozygous knockout mice for NOL3 and SGCD have an enhanced myofiber death and subsequent dystrophic disease (PubMed:24312627).</text>
</comment>